<dbReference type="EC" id="3.1.1.-"/>
<dbReference type="EMBL" id="AP008207">
    <property type="status" value="NOT_ANNOTATED_CDS"/>
    <property type="molecule type" value="Genomic_DNA"/>
</dbReference>
<dbReference type="EMBL" id="AP014957">
    <property type="status" value="NOT_ANNOTATED_CDS"/>
    <property type="molecule type" value="Genomic_DNA"/>
</dbReference>
<dbReference type="EMBL" id="CM000138">
    <property type="protein sequence ID" value="EEE55096.1"/>
    <property type="status" value="ALT_SEQ"/>
    <property type="molecule type" value="Genomic_DNA"/>
</dbReference>
<dbReference type="SMR" id="B9EYD3"/>
<dbReference type="FunCoup" id="B9EYD3">
    <property type="interactions" value="26"/>
</dbReference>
<dbReference type="ESTHER" id="orysj-pla4">
    <property type="family name" value="Plant_phospholipase"/>
</dbReference>
<dbReference type="PaxDb" id="39947-B9EYD3"/>
<dbReference type="KEGG" id="osa:9270605"/>
<dbReference type="eggNOG" id="KOG4569">
    <property type="taxonomic scope" value="Eukaryota"/>
</dbReference>
<dbReference type="InParanoid" id="B9EYD3"/>
<dbReference type="OrthoDB" id="438440at2759"/>
<dbReference type="Proteomes" id="UP000000763">
    <property type="component" value="Chromosome 1"/>
</dbReference>
<dbReference type="Proteomes" id="UP000007752">
    <property type="component" value="Chromosome 1"/>
</dbReference>
<dbReference type="Proteomes" id="UP000059680">
    <property type="component" value="Chromosome 1"/>
</dbReference>
<dbReference type="GO" id="GO:0005737">
    <property type="term" value="C:cytoplasm"/>
    <property type="evidence" value="ECO:0000250"/>
    <property type="project" value="UniProtKB"/>
</dbReference>
<dbReference type="GO" id="GO:0008970">
    <property type="term" value="F:phospholipase A1 activity"/>
    <property type="evidence" value="ECO:0000250"/>
    <property type="project" value="UniProtKB"/>
</dbReference>
<dbReference type="GO" id="GO:0016042">
    <property type="term" value="P:lipid catabolic process"/>
    <property type="evidence" value="ECO:0007669"/>
    <property type="project" value="UniProtKB-KW"/>
</dbReference>
<dbReference type="CDD" id="cd00519">
    <property type="entry name" value="Lipase_3"/>
    <property type="match status" value="1"/>
</dbReference>
<dbReference type="FunFam" id="3.40.50.1820:FF:000065">
    <property type="entry name" value="Phospholipase A1-II 3"/>
    <property type="match status" value="1"/>
</dbReference>
<dbReference type="Gene3D" id="3.40.50.1820">
    <property type="entry name" value="alpha/beta hydrolase"/>
    <property type="match status" value="1"/>
</dbReference>
<dbReference type="InterPro" id="IPR029058">
    <property type="entry name" value="AB_hydrolase_fold"/>
</dbReference>
<dbReference type="InterPro" id="IPR002921">
    <property type="entry name" value="Fungal_lipase-type"/>
</dbReference>
<dbReference type="InterPro" id="IPR033556">
    <property type="entry name" value="PLA"/>
</dbReference>
<dbReference type="PANTHER" id="PTHR31828">
    <property type="entry name" value="PHOSPHOLIPASE A1-IIGAMMA"/>
    <property type="match status" value="1"/>
</dbReference>
<dbReference type="PANTHER" id="PTHR31828:SF1">
    <property type="entry name" value="PHOSPHOLIPASE A1-IIGAMMA"/>
    <property type="match status" value="1"/>
</dbReference>
<dbReference type="Pfam" id="PF01764">
    <property type="entry name" value="Lipase_3"/>
    <property type="match status" value="1"/>
</dbReference>
<dbReference type="SUPFAM" id="SSF53474">
    <property type="entry name" value="alpha/beta-Hydrolases"/>
    <property type="match status" value="1"/>
</dbReference>
<dbReference type="PROSITE" id="PS00120">
    <property type="entry name" value="LIPASE_SER"/>
    <property type="match status" value="1"/>
</dbReference>
<accession>B9EYD3</accession>
<protein>
    <recommendedName>
        <fullName>Phospholipase A1-II 4</fullName>
        <ecNumber>3.1.1.-</ecNumber>
    </recommendedName>
</protein>
<evidence type="ECO:0000250" key="1"/>
<evidence type="ECO:0000255" key="2">
    <source>
        <dbReference type="PROSITE-ProRule" id="PRU10037"/>
    </source>
</evidence>
<evidence type="ECO:0000305" key="3"/>
<comment type="function">
    <text evidence="1">Acylhydrolase that catalyzes the hydrolysis of phospholipids at the sn-1 position.</text>
</comment>
<comment type="subcellular location">
    <subcellularLocation>
        <location evidence="1">Cytoplasm</location>
    </subcellularLocation>
</comment>
<comment type="similarity">
    <text evidence="3">Belongs to the AB hydrolase superfamily. Lipase family.</text>
</comment>
<comment type="sequence caution" evidence="3">
    <conflict type="erroneous gene model prediction">
        <sequence resource="EMBL-CDS" id="EEE55096"/>
    </conflict>
</comment>
<sequence>MSTTAPRAVAERWRELHGEDHWKGLLDPLDADLRRSVIGYGELAQATNDAFIREAWSPHAGACRYSRDRFLEKAQASTQLAGLYEVTAFFYATAGAGGVPAPFMVRNRESNWMGYVAVATDAGVAALGRRDVVVAWRGTVRPMEWLNDLDFTLVSAAGVLGAGGRSPAPRVHRGWLSIYTASDPASKYSKLSAREQISDEIKRLMDKYKDEETSITVVGHSLGAAVATLNAADIVSNGLNQHGACPVTAVAFACPRVGDSGFRKLFDELPGLRLLRVCNSPDVVPKYPPMGYADVGVELPVDTRRSPYLKSPGNQAVWHSLECYMHGVAGAQGKRGGFKLEVDRDVALVNKNVDALKEEYHVPPSWSVQRDKGMVRGADGHWKLMDYEGEESSQDK</sequence>
<name>PLA4_ORYSJ</name>
<keyword id="KW-0963">Cytoplasm</keyword>
<keyword id="KW-0378">Hydrolase</keyword>
<keyword id="KW-0442">Lipid degradation</keyword>
<keyword id="KW-0443">Lipid metabolism</keyword>
<keyword id="KW-1185">Reference proteome</keyword>
<reference key="1">
    <citation type="journal article" date="2005" name="Nature">
        <title>The map-based sequence of the rice genome.</title>
        <authorList>
            <consortium name="International rice genome sequencing project (IRGSP)"/>
        </authorList>
    </citation>
    <scope>NUCLEOTIDE SEQUENCE [LARGE SCALE GENOMIC DNA]</scope>
    <source>
        <strain>cv. Nipponbare</strain>
    </source>
</reference>
<reference key="2">
    <citation type="journal article" date="2008" name="Nucleic Acids Res.">
        <title>The rice annotation project database (RAP-DB): 2008 update.</title>
        <authorList>
            <consortium name="The rice annotation project (RAP)"/>
        </authorList>
    </citation>
    <scope>GENOME REANNOTATION</scope>
    <source>
        <strain>cv. Nipponbare</strain>
    </source>
</reference>
<reference key="3">
    <citation type="journal article" date="2013" name="Rice">
        <title>Improvement of the Oryza sativa Nipponbare reference genome using next generation sequence and optical map data.</title>
        <authorList>
            <person name="Kawahara Y."/>
            <person name="de la Bastide M."/>
            <person name="Hamilton J.P."/>
            <person name="Kanamori H."/>
            <person name="McCombie W.R."/>
            <person name="Ouyang S."/>
            <person name="Schwartz D.C."/>
            <person name="Tanaka T."/>
            <person name="Wu J."/>
            <person name="Zhou S."/>
            <person name="Childs K.L."/>
            <person name="Davidson R.M."/>
            <person name="Lin H."/>
            <person name="Quesada-Ocampo L."/>
            <person name="Vaillancourt B."/>
            <person name="Sakai H."/>
            <person name="Lee S.S."/>
            <person name="Kim J."/>
            <person name="Numa H."/>
            <person name="Itoh T."/>
            <person name="Buell C.R."/>
            <person name="Matsumoto T."/>
        </authorList>
    </citation>
    <scope>GENOME REANNOTATION</scope>
    <source>
        <strain>cv. Nipponbare</strain>
    </source>
</reference>
<reference key="4">
    <citation type="journal article" date="2005" name="PLoS Biol.">
        <title>The genomes of Oryza sativa: a history of duplications.</title>
        <authorList>
            <person name="Yu J."/>
            <person name="Wang J."/>
            <person name="Lin W."/>
            <person name="Li S."/>
            <person name="Li H."/>
            <person name="Zhou J."/>
            <person name="Ni P."/>
            <person name="Dong W."/>
            <person name="Hu S."/>
            <person name="Zeng C."/>
            <person name="Zhang J."/>
            <person name="Zhang Y."/>
            <person name="Li R."/>
            <person name="Xu Z."/>
            <person name="Li S."/>
            <person name="Li X."/>
            <person name="Zheng H."/>
            <person name="Cong L."/>
            <person name="Lin L."/>
            <person name="Yin J."/>
            <person name="Geng J."/>
            <person name="Li G."/>
            <person name="Shi J."/>
            <person name="Liu J."/>
            <person name="Lv H."/>
            <person name="Li J."/>
            <person name="Wang J."/>
            <person name="Deng Y."/>
            <person name="Ran L."/>
            <person name="Shi X."/>
            <person name="Wang X."/>
            <person name="Wu Q."/>
            <person name="Li C."/>
            <person name="Ren X."/>
            <person name="Wang J."/>
            <person name="Wang X."/>
            <person name="Li D."/>
            <person name="Liu D."/>
            <person name="Zhang X."/>
            <person name="Ji Z."/>
            <person name="Zhao W."/>
            <person name="Sun Y."/>
            <person name="Zhang Z."/>
            <person name="Bao J."/>
            <person name="Han Y."/>
            <person name="Dong L."/>
            <person name="Ji J."/>
            <person name="Chen P."/>
            <person name="Wu S."/>
            <person name="Liu J."/>
            <person name="Xiao Y."/>
            <person name="Bu D."/>
            <person name="Tan J."/>
            <person name="Yang L."/>
            <person name="Ye C."/>
            <person name="Zhang J."/>
            <person name="Xu J."/>
            <person name="Zhou Y."/>
            <person name="Yu Y."/>
            <person name="Zhang B."/>
            <person name="Zhuang S."/>
            <person name="Wei H."/>
            <person name="Liu B."/>
            <person name="Lei M."/>
            <person name="Yu H."/>
            <person name="Li Y."/>
            <person name="Xu H."/>
            <person name="Wei S."/>
            <person name="He X."/>
            <person name="Fang L."/>
            <person name="Zhang Z."/>
            <person name="Zhang Y."/>
            <person name="Huang X."/>
            <person name="Su Z."/>
            <person name="Tong W."/>
            <person name="Li J."/>
            <person name="Tong Z."/>
            <person name="Li S."/>
            <person name="Ye J."/>
            <person name="Wang L."/>
            <person name="Fang L."/>
            <person name="Lei T."/>
            <person name="Chen C.-S."/>
            <person name="Chen H.-C."/>
            <person name="Xu Z."/>
            <person name="Li H."/>
            <person name="Huang H."/>
            <person name="Zhang F."/>
            <person name="Xu H."/>
            <person name="Li N."/>
            <person name="Zhao C."/>
            <person name="Li S."/>
            <person name="Dong L."/>
            <person name="Huang Y."/>
            <person name="Li L."/>
            <person name="Xi Y."/>
            <person name="Qi Q."/>
            <person name="Li W."/>
            <person name="Zhang B."/>
            <person name="Hu W."/>
            <person name="Zhang Y."/>
            <person name="Tian X."/>
            <person name="Jiao Y."/>
            <person name="Liang X."/>
            <person name="Jin J."/>
            <person name="Gao L."/>
            <person name="Zheng W."/>
            <person name="Hao B."/>
            <person name="Liu S.-M."/>
            <person name="Wang W."/>
            <person name="Yuan L."/>
            <person name="Cao M."/>
            <person name="McDermott J."/>
            <person name="Samudrala R."/>
            <person name="Wang J."/>
            <person name="Wong G.K.-S."/>
            <person name="Yang H."/>
        </authorList>
    </citation>
    <scope>NUCLEOTIDE SEQUENCE [LARGE SCALE GENOMIC DNA]</scope>
    <source>
        <strain>cv. Nipponbare</strain>
    </source>
</reference>
<proteinExistence type="evidence at transcript level"/>
<organism>
    <name type="scientific">Oryza sativa subsp. japonica</name>
    <name type="common">Rice</name>
    <dbReference type="NCBI Taxonomy" id="39947"/>
    <lineage>
        <taxon>Eukaryota</taxon>
        <taxon>Viridiplantae</taxon>
        <taxon>Streptophyta</taxon>
        <taxon>Embryophyta</taxon>
        <taxon>Tracheophyta</taxon>
        <taxon>Spermatophyta</taxon>
        <taxon>Magnoliopsida</taxon>
        <taxon>Liliopsida</taxon>
        <taxon>Poales</taxon>
        <taxon>Poaceae</taxon>
        <taxon>BOP clade</taxon>
        <taxon>Oryzoideae</taxon>
        <taxon>Oryzeae</taxon>
        <taxon>Oryzinae</taxon>
        <taxon>Oryza</taxon>
        <taxon>Oryza sativa</taxon>
    </lineage>
</organism>
<feature type="chain" id="PRO_0000409368" description="Phospholipase A1-II 4">
    <location>
        <begin position="1"/>
        <end position="396"/>
    </location>
</feature>
<feature type="active site" description="Acyl-ester intermediate" evidence="1">
    <location>
        <position position="221"/>
    </location>
</feature>
<feature type="active site" description="Charge relay system" evidence="2">
    <location>
        <position position="221"/>
    </location>
</feature>
<feature type="active site" description="Charge relay system" evidence="2">
    <location>
        <position position="282"/>
    </location>
</feature>
<feature type="active site" description="Charge relay system" evidence="2">
    <location>
        <position position="319"/>
    </location>
</feature>
<gene>
    <name type="ordered locus">Os01g0652300</name>
    <name type="ordered locus">LOC_Os01g46370</name>
    <name type="ORF">OsJ_02844</name>
</gene>